<dbReference type="EMBL" id="AK125333">
    <property type="status" value="NOT_ANNOTATED_CDS"/>
    <property type="molecule type" value="mRNA"/>
</dbReference>
<dbReference type="GlyGen" id="Q6ZUT4">
    <property type="glycosylation" value="1 site"/>
</dbReference>
<dbReference type="BioMuta" id="-"/>
<dbReference type="neXtProt" id="NX_Q6ZUT4"/>
<dbReference type="InParanoid" id="Q6ZUT4"/>
<dbReference type="PAN-GO" id="Q6ZUT4">
    <property type="GO annotations" value="0 GO annotations based on evolutionary models"/>
</dbReference>
<dbReference type="Pharos" id="Q6ZUT4">
    <property type="development level" value="Tdark"/>
</dbReference>
<dbReference type="Proteomes" id="UP000005640">
    <property type="component" value="Unplaced"/>
</dbReference>
<dbReference type="RNAct" id="Q6ZUT4">
    <property type="molecule type" value="protein"/>
</dbReference>
<evidence type="ECO:0000305" key="1"/>
<accession>Q6ZUT4</accession>
<protein>
    <recommendedName>
        <fullName>Putative uncharacterized protein FLJ43343</fullName>
    </recommendedName>
</protein>
<comment type="caution">
    <text evidence="1">Product of a dubious CDS prediction. No homolog. May not code for a protein.</text>
</comment>
<feature type="chain" id="PRO_0000341604" description="Putative uncharacterized protein FLJ43343">
    <location>
        <begin position="1"/>
        <end position="128"/>
    </location>
</feature>
<proteinExistence type="uncertain"/>
<sequence length="128" mass="14221">MARVHIWPQHTAVNPRLLENQARAMIHHHLMAATPAVFLVSSGPDGSQAKAAAASYLAEPPGSPTPGPFSYTKASVVLFLPNPRPNIFKLHSKEQLAECHQYLQSNMRWDFSFAIKTRMLFLPCSDNV</sequence>
<organism>
    <name type="scientific">Homo sapiens</name>
    <name type="common">Human</name>
    <dbReference type="NCBI Taxonomy" id="9606"/>
    <lineage>
        <taxon>Eukaryota</taxon>
        <taxon>Metazoa</taxon>
        <taxon>Chordata</taxon>
        <taxon>Craniata</taxon>
        <taxon>Vertebrata</taxon>
        <taxon>Euteleostomi</taxon>
        <taxon>Mammalia</taxon>
        <taxon>Eutheria</taxon>
        <taxon>Euarchontoglires</taxon>
        <taxon>Primates</taxon>
        <taxon>Haplorrhini</taxon>
        <taxon>Catarrhini</taxon>
        <taxon>Hominidae</taxon>
        <taxon>Homo</taxon>
    </lineage>
</organism>
<reference key="1">
    <citation type="journal article" date="2004" name="Nat. Genet.">
        <title>Complete sequencing and characterization of 21,243 full-length human cDNAs.</title>
        <authorList>
            <person name="Ota T."/>
            <person name="Suzuki Y."/>
            <person name="Nishikawa T."/>
            <person name="Otsuki T."/>
            <person name="Sugiyama T."/>
            <person name="Irie R."/>
            <person name="Wakamatsu A."/>
            <person name="Hayashi K."/>
            <person name="Sato H."/>
            <person name="Nagai K."/>
            <person name="Kimura K."/>
            <person name="Makita H."/>
            <person name="Sekine M."/>
            <person name="Obayashi M."/>
            <person name="Nishi T."/>
            <person name="Shibahara T."/>
            <person name="Tanaka T."/>
            <person name="Ishii S."/>
            <person name="Yamamoto J."/>
            <person name="Saito K."/>
            <person name="Kawai Y."/>
            <person name="Isono Y."/>
            <person name="Nakamura Y."/>
            <person name="Nagahari K."/>
            <person name="Murakami K."/>
            <person name="Yasuda T."/>
            <person name="Iwayanagi T."/>
            <person name="Wagatsuma M."/>
            <person name="Shiratori A."/>
            <person name="Sudo H."/>
            <person name="Hosoiri T."/>
            <person name="Kaku Y."/>
            <person name="Kodaira H."/>
            <person name="Kondo H."/>
            <person name="Sugawara M."/>
            <person name="Takahashi M."/>
            <person name="Kanda K."/>
            <person name="Yokoi T."/>
            <person name="Furuya T."/>
            <person name="Kikkawa E."/>
            <person name="Omura Y."/>
            <person name="Abe K."/>
            <person name="Kamihara K."/>
            <person name="Katsuta N."/>
            <person name="Sato K."/>
            <person name="Tanikawa M."/>
            <person name="Yamazaki M."/>
            <person name="Ninomiya K."/>
            <person name="Ishibashi T."/>
            <person name="Yamashita H."/>
            <person name="Murakawa K."/>
            <person name="Fujimori K."/>
            <person name="Tanai H."/>
            <person name="Kimata M."/>
            <person name="Watanabe M."/>
            <person name="Hiraoka S."/>
            <person name="Chiba Y."/>
            <person name="Ishida S."/>
            <person name="Ono Y."/>
            <person name="Takiguchi S."/>
            <person name="Watanabe S."/>
            <person name="Yosida M."/>
            <person name="Hotuta T."/>
            <person name="Kusano J."/>
            <person name="Kanehori K."/>
            <person name="Takahashi-Fujii A."/>
            <person name="Hara H."/>
            <person name="Tanase T.-O."/>
            <person name="Nomura Y."/>
            <person name="Togiya S."/>
            <person name="Komai F."/>
            <person name="Hara R."/>
            <person name="Takeuchi K."/>
            <person name="Arita M."/>
            <person name="Imose N."/>
            <person name="Musashino K."/>
            <person name="Yuuki H."/>
            <person name="Oshima A."/>
            <person name="Sasaki N."/>
            <person name="Aotsuka S."/>
            <person name="Yoshikawa Y."/>
            <person name="Matsunawa H."/>
            <person name="Ichihara T."/>
            <person name="Shiohata N."/>
            <person name="Sano S."/>
            <person name="Moriya S."/>
            <person name="Momiyama H."/>
            <person name="Satoh N."/>
            <person name="Takami S."/>
            <person name="Terashima Y."/>
            <person name="Suzuki O."/>
            <person name="Nakagawa S."/>
            <person name="Senoh A."/>
            <person name="Mizoguchi H."/>
            <person name="Goto Y."/>
            <person name="Shimizu F."/>
            <person name="Wakebe H."/>
            <person name="Hishigaki H."/>
            <person name="Watanabe T."/>
            <person name="Sugiyama A."/>
            <person name="Takemoto M."/>
            <person name="Kawakami B."/>
            <person name="Yamazaki M."/>
            <person name="Watanabe K."/>
            <person name="Kumagai A."/>
            <person name="Itakura S."/>
            <person name="Fukuzumi Y."/>
            <person name="Fujimori Y."/>
            <person name="Komiyama M."/>
            <person name="Tashiro H."/>
            <person name="Tanigami A."/>
            <person name="Fujiwara T."/>
            <person name="Ono T."/>
            <person name="Yamada K."/>
            <person name="Fujii Y."/>
            <person name="Ozaki K."/>
            <person name="Hirao M."/>
            <person name="Ohmori Y."/>
            <person name="Kawabata A."/>
            <person name="Hikiji T."/>
            <person name="Kobatake N."/>
            <person name="Inagaki H."/>
            <person name="Ikema Y."/>
            <person name="Okamoto S."/>
            <person name="Okitani R."/>
            <person name="Kawakami T."/>
            <person name="Noguchi S."/>
            <person name="Itoh T."/>
            <person name="Shigeta K."/>
            <person name="Senba T."/>
            <person name="Matsumura K."/>
            <person name="Nakajima Y."/>
            <person name="Mizuno T."/>
            <person name="Morinaga M."/>
            <person name="Sasaki M."/>
            <person name="Togashi T."/>
            <person name="Oyama M."/>
            <person name="Hata H."/>
            <person name="Watanabe M."/>
            <person name="Komatsu T."/>
            <person name="Mizushima-Sugano J."/>
            <person name="Satoh T."/>
            <person name="Shirai Y."/>
            <person name="Takahashi Y."/>
            <person name="Nakagawa K."/>
            <person name="Okumura K."/>
            <person name="Nagase T."/>
            <person name="Nomura N."/>
            <person name="Kikuchi H."/>
            <person name="Masuho Y."/>
            <person name="Yamashita R."/>
            <person name="Nakai K."/>
            <person name="Yada T."/>
            <person name="Nakamura Y."/>
            <person name="Ohara O."/>
            <person name="Isogai T."/>
            <person name="Sugano S."/>
        </authorList>
    </citation>
    <scope>NUCLEOTIDE SEQUENCE [LARGE SCALE MRNA]</scope>
    <source>
        <tissue>Teratocarcinoma</tissue>
    </source>
</reference>
<keyword id="KW-1185">Reference proteome</keyword>
<name>YL014_HUMAN</name>